<keyword id="KW-0067">ATP-binding</keyword>
<keyword id="KW-0133">Cell shape</keyword>
<keyword id="KW-0961">Cell wall biogenesis/degradation</keyword>
<keyword id="KW-0963">Cytoplasm</keyword>
<keyword id="KW-0436">Ligase</keyword>
<keyword id="KW-0460">Magnesium</keyword>
<keyword id="KW-0464">Manganese</keyword>
<keyword id="KW-0479">Metal-binding</keyword>
<keyword id="KW-0547">Nucleotide-binding</keyword>
<keyword id="KW-0573">Peptidoglycan synthesis</keyword>
<organism>
    <name type="scientific">Anaplasma marginale (strain St. Maries)</name>
    <dbReference type="NCBI Taxonomy" id="234826"/>
    <lineage>
        <taxon>Bacteria</taxon>
        <taxon>Pseudomonadati</taxon>
        <taxon>Pseudomonadota</taxon>
        <taxon>Alphaproteobacteria</taxon>
        <taxon>Rickettsiales</taxon>
        <taxon>Anaplasmataceae</taxon>
        <taxon>Anaplasma</taxon>
    </lineage>
</organism>
<dbReference type="EC" id="6.3.2.4" evidence="2"/>
<dbReference type="EMBL" id="CP000030">
    <property type="protein sequence ID" value="AAV86327.1"/>
    <property type="molecule type" value="Genomic_DNA"/>
</dbReference>
<dbReference type="RefSeq" id="WP_011114164.1">
    <property type="nucleotide sequence ID" value="NZ_AFMU01000008.1"/>
</dbReference>
<dbReference type="SMR" id="Q5PBK2"/>
<dbReference type="KEGG" id="ama:AM205"/>
<dbReference type="PATRIC" id="fig|320483.3.peg.174"/>
<dbReference type="HOGENOM" id="CLU_039268_2_0_5"/>
<dbReference type="UniPathway" id="UPA00219"/>
<dbReference type="GO" id="GO:0005737">
    <property type="term" value="C:cytoplasm"/>
    <property type="evidence" value="ECO:0007669"/>
    <property type="project" value="UniProtKB-SubCell"/>
</dbReference>
<dbReference type="GO" id="GO:0005524">
    <property type="term" value="F:ATP binding"/>
    <property type="evidence" value="ECO:0007669"/>
    <property type="project" value="UniProtKB-KW"/>
</dbReference>
<dbReference type="GO" id="GO:0008716">
    <property type="term" value="F:D-alanine-D-alanine ligase activity"/>
    <property type="evidence" value="ECO:0007669"/>
    <property type="project" value="UniProtKB-UniRule"/>
</dbReference>
<dbReference type="GO" id="GO:0046872">
    <property type="term" value="F:metal ion binding"/>
    <property type="evidence" value="ECO:0007669"/>
    <property type="project" value="UniProtKB-KW"/>
</dbReference>
<dbReference type="GO" id="GO:0071555">
    <property type="term" value="P:cell wall organization"/>
    <property type="evidence" value="ECO:0007669"/>
    <property type="project" value="UniProtKB-KW"/>
</dbReference>
<dbReference type="GO" id="GO:0009252">
    <property type="term" value="P:peptidoglycan biosynthetic process"/>
    <property type="evidence" value="ECO:0007669"/>
    <property type="project" value="UniProtKB-UniRule"/>
</dbReference>
<dbReference type="GO" id="GO:0008360">
    <property type="term" value="P:regulation of cell shape"/>
    <property type="evidence" value="ECO:0007669"/>
    <property type="project" value="UniProtKB-KW"/>
</dbReference>
<dbReference type="Gene3D" id="3.40.50.20">
    <property type="match status" value="1"/>
</dbReference>
<dbReference type="Gene3D" id="3.30.1490.20">
    <property type="entry name" value="ATP-grasp fold, A domain"/>
    <property type="match status" value="1"/>
</dbReference>
<dbReference type="Gene3D" id="3.30.470.20">
    <property type="entry name" value="ATP-grasp fold, B domain"/>
    <property type="match status" value="1"/>
</dbReference>
<dbReference type="HAMAP" id="MF_00047">
    <property type="entry name" value="Dala_Dala_lig"/>
    <property type="match status" value="1"/>
</dbReference>
<dbReference type="InterPro" id="IPR011761">
    <property type="entry name" value="ATP-grasp"/>
</dbReference>
<dbReference type="InterPro" id="IPR013815">
    <property type="entry name" value="ATP_grasp_subdomain_1"/>
</dbReference>
<dbReference type="InterPro" id="IPR000291">
    <property type="entry name" value="D-Ala_lig_Van_CS"/>
</dbReference>
<dbReference type="InterPro" id="IPR005905">
    <property type="entry name" value="D_ala_D_ala"/>
</dbReference>
<dbReference type="InterPro" id="IPR011095">
    <property type="entry name" value="Dala_Dala_lig_C"/>
</dbReference>
<dbReference type="InterPro" id="IPR016185">
    <property type="entry name" value="PreATP-grasp_dom_sf"/>
</dbReference>
<dbReference type="NCBIfam" id="NF002378">
    <property type="entry name" value="PRK01372.1"/>
    <property type="match status" value="1"/>
</dbReference>
<dbReference type="PANTHER" id="PTHR23132">
    <property type="entry name" value="D-ALANINE--D-ALANINE LIGASE"/>
    <property type="match status" value="1"/>
</dbReference>
<dbReference type="PANTHER" id="PTHR23132:SF23">
    <property type="entry name" value="D-ALANINE--D-ALANINE LIGASE B"/>
    <property type="match status" value="1"/>
</dbReference>
<dbReference type="Pfam" id="PF07478">
    <property type="entry name" value="Dala_Dala_lig_C"/>
    <property type="match status" value="1"/>
</dbReference>
<dbReference type="PIRSF" id="PIRSF039102">
    <property type="entry name" value="Ddl/VanB"/>
    <property type="match status" value="1"/>
</dbReference>
<dbReference type="SUPFAM" id="SSF56059">
    <property type="entry name" value="Glutathione synthetase ATP-binding domain-like"/>
    <property type="match status" value="1"/>
</dbReference>
<dbReference type="SUPFAM" id="SSF52440">
    <property type="entry name" value="PreATP-grasp domain"/>
    <property type="match status" value="1"/>
</dbReference>
<dbReference type="PROSITE" id="PS50975">
    <property type="entry name" value="ATP_GRASP"/>
    <property type="match status" value="1"/>
</dbReference>
<dbReference type="PROSITE" id="PS00843">
    <property type="entry name" value="DALA_DALA_LIGASE_1"/>
    <property type="match status" value="1"/>
</dbReference>
<sequence>MPVSLARNAGMLSVAVLCGGSSPEREVSLAGGKRVADALGRLGYNATVLDLNRESVGQLLAMAPDLVYNALHGVQGEDGCVSGLLDILGLACTHSHVAASSVGMDKVLTKHVLKSLGIDFPKFDVLTKEELLSAKEVLPYPFVIKPVRGGSTIGVHAIFSKSEYLDLSAHADTLEDRMIVEEYVSGQEVQTAVFLGRAIGTMELLFEGRIYSYDAKYVEGLCEHIFPANLPYDIYNLTLEWALKLHQCLGCKTLSRVDFRYDVANKALKLLEINTHPGMTVSSTLPEVLWLRCGLNFDHVVDLIVQDALGIDDSRRAYIDELMGKTVSREPSHV</sequence>
<name>DDL_ANAMM</name>
<proteinExistence type="inferred from homology"/>
<accession>Q5PBK2</accession>
<reference key="1">
    <citation type="journal article" date="2005" name="Proc. Natl. Acad. Sci. U.S.A.">
        <title>Complete genome sequencing of Anaplasma marginale reveals that the surface is skewed to two superfamilies of outer membrane proteins.</title>
        <authorList>
            <person name="Brayton K.A."/>
            <person name="Kappmeyer L.S."/>
            <person name="Herndon D.R."/>
            <person name="Dark M.J."/>
            <person name="Tibbals D.L."/>
            <person name="Palmer G.H."/>
            <person name="McGuire T.C."/>
            <person name="Knowles D.P. Jr."/>
        </authorList>
    </citation>
    <scope>NUCLEOTIDE SEQUENCE [LARGE SCALE GENOMIC DNA]</scope>
    <source>
        <strain>St. Maries</strain>
    </source>
</reference>
<feature type="chain" id="PRO_0000341052" description="D-alanine--D-alanine ligase">
    <location>
        <begin position="1"/>
        <end position="334"/>
    </location>
</feature>
<feature type="domain" description="ATP-grasp" evidence="2">
    <location>
        <begin position="110"/>
        <end position="306"/>
    </location>
</feature>
<feature type="binding site" evidence="2">
    <location>
        <begin position="138"/>
        <end position="190"/>
    </location>
    <ligand>
        <name>ATP</name>
        <dbReference type="ChEBI" id="CHEBI:30616"/>
    </ligand>
</feature>
<feature type="binding site" evidence="2">
    <location>
        <position position="258"/>
    </location>
    <ligand>
        <name>Mg(2+)</name>
        <dbReference type="ChEBI" id="CHEBI:18420"/>
        <label>1</label>
    </ligand>
</feature>
<feature type="binding site" evidence="2">
    <location>
        <position position="272"/>
    </location>
    <ligand>
        <name>Mg(2+)</name>
        <dbReference type="ChEBI" id="CHEBI:18420"/>
        <label>1</label>
    </ligand>
</feature>
<feature type="binding site" evidence="2">
    <location>
        <position position="272"/>
    </location>
    <ligand>
        <name>Mg(2+)</name>
        <dbReference type="ChEBI" id="CHEBI:18420"/>
        <label>2</label>
    </ligand>
</feature>
<feature type="binding site" evidence="2">
    <location>
        <position position="274"/>
    </location>
    <ligand>
        <name>Mg(2+)</name>
        <dbReference type="ChEBI" id="CHEBI:18420"/>
        <label>2</label>
    </ligand>
</feature>
<protein>
    <recommendedName>
        <fullName evidence="2">D-alanine--D-alanine ligase</fullName>
        <ecNumber evidence="2">6.3.2.4</ecNumber>
    </recommendedName>
    <alternativeName>
        <fullName evidence="2">D-Ala-D-Ala ligase</fullName>
    </alternativeName>
    <alternativeName>
        <fullName evidence="2">D-alanylalanine synthetase</fullName>
    </alternativeName>
</protein>
<evidence type="ECO:0000250" key="1"/>
<evidence type="ECO:0000255" key="2">
    <source>
        <dbReference type="HAMAP-Rule" id="MF_00047"/>
    </source>
</evidence>
<comment type="function">
    <text evidence="2">Cell wall formation.</text>
</comment>
<comment type="catalytic activity">
    <reaction evidence="2">
        <text>2 D-alanine + ATP = D-alanyl-D-alanine + ADP + phosphate + H(+)</text>
        <dbReference type="Rhea" id="RHEA:11224"/>
        <dbReference type="ChEBI" id="CHEBI:15378"/>
        <dbReference type="ChEBI" id="CHEBI:30616"/>
        <dbReference type="ChEBI" id="CHEBI:43474"/>
        <dbReference type="ChEBI" id="CHEBI:57416"/>
        <dbReference type="ChEBI" id="CHEBI:57822"/>
        <dbReference type="ChEBI" id="CHEBI:456216"/>
        <dbReference type="EC" id="6.3.2.4"/>
    </reaction>
</comment>
<comment type="cofactor">
    <cofactor evidence="1">
        <name>Mg(2+)</name>
        <dbReference type="ChEBI" id="CHEBI:18420"/>
    </cofactor>
    <cofactor evidence="1">
        <name>Mn(2+)</name>
        <dbReference type="ChEBI" id="CHEBI:29035"/>
    </cofactor>
    <text evidence="1">Binds 2 magnesium or manganese ions per subunit.</text>
</comment>
<comment type="pathway">
    <text evidence="2">Cell wall biogenesis; peptidoglycan biosynthesis.</text>
</comment>
<comment type="subcellular location">
    <subcellularLocation>
        <location evidence="2">Cytoplasm</location>
    </subcellularLocation>
</comment>
<comment type="similarity">
    <text evidence="2">Belongs to the D-alanine--D-alanine ligase family.</text>
</comment>
<gene>
    <name evidence="2" type="primary">ddl</name>
    <name type="ordered locus">AM205</name>
</gene>